<reference key="1">
    <citation type="journal article" date="2011" name="Plant Mol. Biol.">
        <title>RNA-seq discovery, functional characterization, and comparison of sesquiterpene synthases from Solanum lycopersicum and Solanum habrochaites trichomes.</title>
        <authorList>
            <person name="Bleeker P.M."/>
            <person name="Spyropoulou E.A."/>
            <person name="Diergaarde P.J."/>
            <person name="Volpin H."/>
            <person name="De Both M.T.J."/>
            <person name="Zerbe P."/>
            <person name="Bohlmann J."/>
            <person name="Falara V."/>
            <person name="Matsuba Y."/>
            <person name="Pichersky E."/>
            <person name="Haring M.A."/>
            <person name="Schuurink R.C."/>
        </authorList>
    </citation>
    <scope>NUCLEOTIDE SEQUENCE [MRNA]</scope>
    <scope>FUNCTION</scope>
    <scope>CATALYTIC ACTIVITY</scope>
    <scope>PATHWAY</scope>
    <scope>GENE FAMILY</scope>
    <source>
        <strain>cv. PI127826</strain>
    </source>
</reference>
<dbReference type="EC" id="4.2.3.73" evidence="3"/>
<dbReference type="EC" id="4.2.3.47" evidence="3"/>
<dbReference type="EC" id="4.2.3.106" evidence="3"/>
<dbReference type="EC" id="4.2.3.-" evidence="3"/>
<dbReference type="EC" id="4.2.3.54" evidence="3"/>
<dbReference type="EC" id="4.2.3.81" evidence="3"/>
<dbReference type="EC" id="4.2.3.15" evidence="3"/>
<dbReference type="EC" id="4.2.3.114" evidence="3"/>
<dbReference type="EC" id="4.2.3.113" evidence="3"/>
<dbReference type="EMBL" id="JN402391">
    <property type="protein sequence ID" value="AEM23828.1"/>
    <property type="molecule type" value="mRNA"/>
</dbReference>
<dbReference type="SMR" id="G8H5N0"/>
<dbReference type="UniPathway" id="UPA00213"/>
<dbReference type="GO" id="GO:0000287">
    <property type="term" value="F:magnesium ion binding"/>
    <property type="evidence" value="ECO:0007669"/>
    <property type="project" value="InterPro"/>
</dbReference>
<dbReference type="GO" id="GO:0010333">
    <property type="term" value="F:terpene synthase activity"/>
    <property type="evidence" value="ECO:0000314"/>
    <property type="project" value="UniProtKB"/>
</dbReference>
<dbReference type="GO" id="GO:0016102">
    <property type="term" value="P:diterpenoid biosynthetic process"/>
    <property type="evidence" value="ECO:0007669"/>
    <property type="project" value="InterPro"/>
</dbReference>
<dbReference type="GO" id="GO:0016114">
    <property type="term" value="P:terpenoid biosynthetic process"/>
    <property type="evidence" value="ECO:0000314"/>
    <property type="project" value="UniProtKB"/>
</dbReference>
<dbReference type="CDD" id="cd00684">
    <property type="entry name" value="Terpene_cyclase_plant_C1"/>
    <property type="match status" value="1"/>
</dbReference>
<dbReference type="FunFam" id="1.10.600.10:FF:000007">
    <property type="entry name" value="Isoprene synthase, chloroplastic"/>
    <property type="match status" value="1"/>
</dbReference>
<dbReference type="FunFam" id="1.50.10.130:FF:000001">
    <property type="entry name" value="Isoprene synthase, chloroplastic"/>
    <property type="match status" value="1"/>
</dbReference>
<dbReference type="Gene3D" id="1.10.600.10">
    <property type="entry name" value="Farnesyl Diphosphate Synthase"/>
    <property type="match status" value="1"/>
</dbReference>
<dbReference type="Gene3D" id="1.50.10.130">
    <property type="entry name" value="Terpene synthase, N-terminal domain"/>
    <property type="match status" value="1"/>
</dbReference>
<dbReference type="InterPro" id="IPR008949">
    <property type="entry name" value="Isoprenoid_synthase_dom_sf"/>
</dbReference>
<dbReference type="InterPro" id="IPR034741">
    <property type="entry name" value="Terpene_cyclase-like_1_C"/>
</dbReference>
<dbReference type="InterPro" id="IPR044814">
    <property type="entry name" value="Terpene_cyclase_plant_C1"/>
</dbReference>
<dbReference type="InterPro" id="IPR001906">
    <property type="entry name" value="Terpene_synth_N"/>
</dbReference>
<dbReference type="InterPro" id="IPR036965">
    <property type="entry name" value="Terpene_synth_N_sf"/>
</dbReference>
<dbReference type="InterPro" id="IPR050148">
    <property type="entry name" value="Terpene_synthase-like"/>
</dbReference>
<dbReference type="InterPro" id="IPR005630">
    <property type="entry name" value="Terpene_synthase_metal-bd"/>
</dbReference>
<dbReference type="InterPro" id="IPR008930">
    <property type="entry name" value="Terpenoid_cyclase/PrenylTrfase"/>
</dbReference>
<dbReference type="PANTHER" id="PTHR31225">
    <property type="entry name" value="OS04G0344100 PROTEIN-RELATED"/>
    <property type="match status" value="1"/>
</dbReference>
<dbReference type="PANTHER" id="PTHR31225:SF209">
    <property type="entry name" value="TERPENE SYNTHASE 17"/>
    <property type="match status" value="1"/>
</dbReference>
<dbReference type="Pfam" id="PF01397">
    <property type="entry name" value="Terpene_synth"/>
    <property type="match status" value="1"/>
</dbReference>
<dbReference type="Pfam" id="PF03936">
    <property type="entry name" value="Terpene_synth_C"/>
    <property type="match status" value="1"/>
</dbReference>
<dbReference type="SFLD" id="SFLDS00005">
    <property type="entry name" value="Isoprenoid_Synthase_Type_I"/>
    <property type="match status" value="1"/>
</dbReference>
<dbReference type="SFLD" id="SFLDG01019">
    <property type="entry name" value="Terpene_Cyclase_Like_1_C_Termi"/>
    <property type="match status" value="1"/>
</dbReference>
<dbReference type="SUPFAM" id="SSF48239">
    <property type="entry name" value="Terpenoid cyclases/Protein prenyltransferases"/>
    <property type="match status" value="1"/>
</dbReference>
<dbReference type="SUPFAM" id="SSF48576">
    <property type="entry name" value="Terpenoid synthases"/>
    <property type="match status" value="1"/>
</dbReference>
<gene>
    <name evidence="4" type="primary">TPS17</name>
</gene>
<name>TPS17_SOLHA</name>
<protein>
    <recommendedName>
        <fullName evidence="4">Terpene synthase 17</fullName>
        <shortName evidence="4">ShTPS17</shortName>
    </recommendedName>
    <alternativeName>
        <fullName evidence="4">(+)-valencene synthase TPS17</fullName>
        <ecNumber evidence="3">4.2.3.73</ecNumber>
    </alternativeName>
    <alternativeName>
        <fullName evidence="4">(E)-beta-farnesene synthase TPS17</fullName>
        <ecNumber evidence="3">4.2.3.47</ecNumber>
    </alternativeName>
    <alternativeName>
        <fullName evidence="4">(E)-beta-ocimene synthase TPS17</fullName>
        <ecNumber evidence="3">4.2.3.106</ecNumber>
    </alternativeName>
    <alternativeName>
        <fullName evidence="4">(E)-gamma-bisabolene synthase TPS17</fullName>
        <ecNumber evidence="3">4.2.3.-</ecNumber>
    </alternativeName>
    <alternativeName>
        <fullName evidence="4">(Z)-beta-ocimene synthase TPS17</fullName>
        <ecNumber evidence="3">4.2.3.-</ecNumber>
    </alternativeName>
    <alternativeName>
        <fullName evidence="4">(Z)-gamma-bisabolene synthase TPS17</fullName>
        <ecNumber evidence="3">4.2.3.-</ecNumber>
    </alternativeName>
    <alternativeName>
        <fullName evidence="4">Alpha-bergamotene synthase TPS17</fullName>
        <ecNumber evidence="3">4.2.3.54</ecNumber>
        <ecNumber evidence="3">4.2.3.81</ecNumber>
    </alternativeName>
    <alternativeName>
        <fullName evidence="4">Beta-bisabolene synthase TPS17</fullName>
        <ecNumber evidence="3">4.2.3.-</ecNumber>
    </alternativeName>
    <alternativeName>
        <fullName evidence="4">Beta-myrcene synthase TPS17</fullName>
        <ecNumber evidence="3">4.2.3.15</ecNumber>
    </alternativeName>
    <alternativeName>
        <fullName evidence="4">Gamma-gurjunene synthase TPS17</fullName>
        <ecNumber evidence="3">4.2.3.-</ecNumber>
    </alternativeName>
    <alternativeName>
        <fullName evidence="4">Gamma-terpinene synthase TPS17</fullName>
        <ecNumber evidence="3">4.2.3.114</ecNumber>
    </alternativeName>
    <alternativeName>
        <fullName evidence="4">Limonene synthase TPS17</fullName>
        <ecNumber evidence="3">4.2.3.-</ecNumber>
    </alternativeName>
    <alternativeName>
        <fullName evidence="4">Terpinolene synthase TPS17</fullName>
        <ecNumber evidence="3">4.2.3.113</ecNumber>
    </alternativeName>
</protein>
<sequence>MELCTQTVAADHEVIITRRSGSHHPTLWGDHFLAYADLRGANEGEEKQNEDLKEEVRKMLVMAPSNSLEKLELINTIQCLGLAYHFQSEIDESLSYMYTHYEEYSIGDLHAIALCFRLLRQQGYYVSCDAFKKFTNDQGNFKEELVKDVEGMLSLYEAAQFRVHGEQILDEALNFTITKLKQILPKLSNSQLAQQITNALKFPIKDGIVRVETRKYISFYQQNQNHNQVLLNFAKLDFNILQTLHKKELSDMTRWWKKMELVNTLPYARDRLVECYFWCLGTYFEPQYSVARKMLTKISFFISIIDDTYDIYGKLDELTLFTQAIERWNIDASEQLPLYMKIIYRDLLDVYDEIEKELANENKSFLVNYSINEMKKVVRGYFQEAKWYYGKKVPKMEQYMKNAISTSAYILLTTTSWLAMGNVATKDVFDWVATEPKLVVASCHIIRLLNDLVSHEEEQKRGNAASAVECYMNEYSVTQEEAHVKIRDIIENYWKDLNEEYFKVDMIIIPRVLLMCIINLTRVAEFIYKDEDAYTFSKNNLKDVISDILVDPII</sequence>
<evidence type="ECO:0000250" key="1">
    <source>
        <dbReference type="UniProtKB" id="A0A1C9J6A7"/>
    </source>
</evidence>
<evidence type="ECO:0000250" key="2">
    <source>
        <dbReference type="UniProtKB" id="Q40577"/>
    </source>
</evidence>
<evidence type="ECO:0000269" key="3">
    <source>
    </source>
</evidence>
<evidence type="ECO:0000303" key="4">
    <source>
    </source>
</evidence>
<evidence type="ECO:0000305" key="5"/>
<proteinExistence type="evidence at protein level"/>
<feature type="chain" id="PRO_0000454689" description="Terpene synthase 17">
    <location>
        <begin position="1"/>
        <end position="554"/>
    </location>
</feature>
<feature type="short sequence motif" description="DDXXD motif" evidence="1">
    <location>
        <begin position="306"/>
        <end position="310"/>
    </location>
</feature>
<feature type="binding site" evidence="2">
    <location>
        <position position="306"/>
    </location>
    <ligand>
        <name>Mg(2+)</name>
        <dbReference type="ChEBI" id="CHEBI:18420"/>
        <label>1</label>
    </ligand>
</feature>
<feature type="binding site" evidence="2">
    <location>
        <position position="306"/>
    </location>
    <ligand>
        <name>Mg(2+)</name>
        <dbReference type="ChEBI" id="CHEBI:18420"/>
        <label>2</label>
    </ligand>
</feature>
<feature type="binding site" evidence="2">
    <location>
        <position position="310"/>
    </location>
    <ligand>
        <name>Mg(2+)</name>
        <dbReference type="ChEBI" id="CHEBI:18420"/>
        <label>1</label>
    </ligand>
</feature>
<feature type="binding site" evidence="2">
    <location>
        <position position="310"/>
    </location>
    <ligand>
        <name>Mg(2+)</name>
        <dbReference type="ChEBI" id="CHEBI:18420"/>
        <label>2</label>
    </ligand>
</feature>
<feature type="binding site" evidence="2">
    <location>
        <position position="458"/>
    </location>
    <ligand>
        <name>Mg(2+)</name>
        <dbReference type="ChEBI" id="CHEBI:18420"/>
        <label>3</label>
    </ligand>
</feature>
<comment type="function">
    <text evidence="3">Sesquiterpene synthase involved in the biosynthesis of volatile compounds (PubMed:21818683). Mediates the conversion of (2E,6E)-farnesyl diphosphate (FPP) into gamma-gurjunene, (E)-beta-farnesene and (+)-valencene, and of (2Z,6Z)-farnesyl diphosphate ((ZZ)-FPP) into (E)-alpha-bergamotene and (Z)-gamma-bisabolene as well as beta-bisabolene, (Z)-alpha-bergamotene and (E)-gamma-bisabolene to a lower extent (PubMed:21818683). Can act with a low efficiency as a monoterpene synthase with geranyl diphosphate (GPP) as substrate, thus producing beta-myrcene, (E)-beta-ocimene, limonene, terpinolene, gamma-terpinene and (Z)-beta-ocimene (PubMed:21818683).</text>
</comment>
<comment type="catalytic activity">
    <reaction evidence="3">
        <text>(2E,6E)-farnesyl diphosphate = (+)-valencene + diphosphate</text>
        <dbReference type="Rhea" id="RHEA:29511"/>
        <dbReference type="ChEBI" id="CHEBI:33019"/>
        <dbReference type="ChEBI" id="CHEBI:61700"/>
        <dbReference type="ChEBI" id="CHEBI:175763"/>
        <dbReference type="EC" id="4.2.3.73"/>
    </reaction>
    <physiologicalReaction direction="left-to-right" evidence="3">
        <dbReference type="Rhea" id="RHEA:29512"/>
    </physiologicalReaction>
</comment>
<comment type="catalytic activity">
    <reaction evidence="3">
        <text>(2E,6E)-farnesyl diphosphate = (E)-beta-farnesene + diphosphate</text>
        <dbReference type="Rhea" id="RHEA:27425"/>
        <dbReference type="ChEBI" id="CHEBI:10418"/>
        <dbReference type="ChEBI" id="CHEBI:33019"/>
        <dbReference type="ChEBI" id="CHEBI:175763"/>
        <dbReference type="EC" id="4.2.3.47"/>
    </reaction>
    <physiologicalReaction direction="left-to-right" evidence="3">
        <dbReference type="Rhea" id="RHEA:27426"/>
    </physiologicalReaction>
</comment>
<comment type="catalytic activity">
    <reaction evidence="3">
        <text>(2E,6E)-farnesyl diphosphate = gamma-gurjunene + diphosphate</text>
        <dbReference type="Rhea" id="RHEA:68400"/>
        <dbReference type="ChEBI" id="CHEBI:33019"/>
        <dbReference type="ChEBI" id="CHEBI:175763"/>
        <dbReference type="ChEBI" id="CHEBI:178033"/>
    </reaction>
    <physiologicalReaction direction="left-to-right" evidence="3">
        <dbReference type="Rhea" id="RHEA:68401"/>
    </physiologicalReaction>
</comment>
<comment type="catalytic activity">
    <reaction evidence="3">
        <text>(2Z,6Z)-farnesyl diphosphate = beta-bisabolene + diphosphate</text>
        <dbReference type="Rhea" id="RHEA:68524"/>
        <dbReference type="ChEBI" id="CHEBI:33019"/>
        <dbReference type="ChEBI" id="CHEBI:49249"/>
        <dbReference type="ChEBI" id="CHEBI:60374"/>
    </reaction>
    <physiologicalReaction direction="left-to-right" evidence="3">
        <dbReference type="Rhea" id="RHEA:68525"/>
    </physiologicalReaction>
</comment>
<comment type="catalytic activity">
    <reaction evidence="3">
        <text>(2Z,6Z)-farnesyl diphosphate = (E)-gamma-bisabolene + diphosphate</text>
        <dbReference type="Rhea" id="RHEA:68468"/>
        <dbReference type="ChEBI" id="CHEBI:33019"/>
        <dbReference type="ChEBI" id="CHEBI:49239"/>
        <dbReference type="ChEBI" id="CHEBI:60374"/>
    </reaction>
    <physiologicalReaction direction="left-to-right" evidence="3">
        <dbReference type="Rhea" id="RHEA:68469"/>
    </physiologicalReaction>
</comment>
<comment type="catalytic activity">
    <reaction evidence="3">
        <text>(2E)-geranyl diphosphate = limonene + diphosphate</text>
        <dbReference type="Rhea" id="RHEA:68640"/>
        <dbReference type="ChEBI" id="CHEBI:15384"/>
        <dbReference type="ChEBI" id="CHEBI:33019"/>
        <dbReference type="ChEBI" id="CHEBI:58057"/>
    </reaction>
    <physiologicalReaction direction="left-to-right" evidence="3">
        <dbReference type="Rhea" id="RHEA:68641"/>
    </physiologicalReaction>
</comment>
<comment type="catalytic activity">
    <reaction evidence="3">
        <text>(2E)-geranyl diphosphate = beta-myrcene + diphosphate</text>
        <dbReference type="Rhea" id="RHEA:16965"/>
        <dbReference type="ChEBI" id="CHEBI:17221"/>
        <dbReference type="ChEBI" id="CHEBI:33019"/>
        <dbReference type="ChEBI" id="CHEBI:58057"/>
        <dbReference type="EC" id="4.2.3.15"/>
    </reaction>
    <physiologicalReaction direction="left-to-right" evidence="3">
        <dbReference type="Rhea" id="RHEA:16966"/>
    </physiologicalReaction>
</comment>
<comment type="catalytic activity">
    <reaction evidence="3">
        <text>(2E)-geranyl diphosphate = (E)-beta-ocimene + diphosphate</text>
        <dbReference type="Rhea" id="RHEA:32691"/>
        <dbReference type="ChEBI" id="CHEBI:33019"/>
        <dbReference type="ChEBI" id="CHEBI:58057"/>
        <dbReference type="ChEBI" id="CHEBI:64280"/>
        <dbReference type="EC" id="4.2.3.106"/>
    </reaction>
    <physiologicalReaction direction="left-to-right" evidence="3">
        <dbReference type="Rhea" id="RHEA:32692"/>
    </physiologicalReaction>
</comment>
<comment type="catalytic activity">
    <reaction evidence="3">
        <text>(2E)-geranyl diphosphate = terpinolene + diphosphate</text>
        <dbReference type="Rhea" id="RHEA:25500"/>
        <dbReference type="ChEBI" id="CHEBI:9457"/>
        <dbReference type="ChEBI" id="CHEBI:33019"/>
        <dbReference type="ChEBI" id="CHEBI:58057"/>
        <dbReference type="EC" id="4.2.3.113"/>
    </reaction>
    <physiologicalReaction direction="left-to-right" evidence="3">
        <dbReference type="Rhea" id="RHEA:25501"/>
    </physiologicalReaction>
</comment>
<comment type="catalytic activity">
    <reaction evidence="3">
        <text>(2E)-geranyl diphosphate = gamma-terpinene + diphosphate</text>
        <dbReference type="Rhea" id="RHEA:32559"/>
        <dbReference type="ChEBI" id="CHEBI:10577"/>
        <dbReference type="ChEBI" id="CHEBI:33019"/>
        <dbReference type="ChEBI" id="CHEBI:58057"/>
        <dbReference type="EC" id="4.2.3.114"/>
    </reaction>
    <physiologicalReaction direction="left-to-right" evidence="3">
        <dbReference type="Rhea" id="RHEA:32560"/>
    </physiologicalReaction>
</comment>
<comment type="catalytic activity">
    <reaction evidence="3">
        <text>(2Z,6Z)-farnesyl diphosphate = (Z)-gamma-bisabolene + diphosphate</text>
        <dbReference type="Rhea" id="RHEA:68788"/>
        <dbReference type="ChEBI" id="CHEBI:33019"/>
        <dbReference type="ChEBI" id="CHEBI:49238"/>
        <dbReference type="ChEBI" id="CHEBI:60374"/>
    </reaction>
    <physiologicalReaction direction="left-to-right" evidence="3">
        <dbReference type="Rhea" id="RHEA:68789"/>
    </physiologicalReaction>
</comment>
<comment type="catalytic activity">
    <reaction evidence="3">
        <text>(2E,6E)-farnesyl diphosphate = (1S,5S,6R)-alpha-bergamotene + diphosphate</text>
        <dbReference type="Rhea" id="RHEA:31427"/>
        <dbReference type="ChEBI" id="CHEBI:33019"/>
        <dbReference type="ChEBI" id="CHEBI:62756"/>
        <dbReference type="ChEBI" id="CHEBI:175763"/>
        <dbReference type="EC" id="4.2.3.81"/>
    </reaction>
    <physiologicalReaction direction="left-to-right" evidence="3">
        <dbReference type="Rhea" id="RHEA:31428"/>
    </physiologicalReaction>
</comment>
<comment type="catalytic activity">
    <reaction evidence="3">
        <text>(2Z,6Z)-farnesyl diphosphate = (1S,5S,6S)-alpha-bergamotene + diphosphate</text>
        <dbReference type="Rhea" id="RHEA:30471"/>
        <dbReference type="ChEBI" id="CHEBI:33019"/>
        <dbReference type="ChEBI" id="CHEBI:60374"/>
        <dbReference type="ChEBI" id="CHEBI:61679"/>
        <dbReference type="EC" id="4.2.3.54"/>
    </reaction>
    <physiologicalReaction direction="left-to-right" evidence="3">
        <dbReference type="Rhea" id="RHEA:30472"/>
    </physiologicalReaction>
</comment>
<comment type="cofactor">
    <cofactor evidence="1">
        <name>Mg(2+)</name>
        <dbReference type="ChEBI" id="CHEBI:18420"/>
    </cofactor>
    <cofactor evidence="1">
        <name>Mn(2+)</name>
        <dbReference type="ChEBI" id="CHEBI:29035"/>
    </cofactor>
    <text evidence="1">Binds 3 Mg(2+) or Mn(2+) ions per subunit.</text>
</comment>
<comment type="pathway">
    <text evidence="3">Secondary metabolite biosynthesis; terpenoid biosynthesis.</text>
</comment>
<comment type="domain">
    <text evidence="2">The Asp-Asp-Xaa-Xaa-Asp/Glu (DDXXD/E) motif is important for the catalytic activity, presumably through binding to Mg(2+).</text>
</comment>
<comment type="similarity">
    <text evidence="5">Belongs to the terpene synthase family. Tpsa subfamily.</text>
</comment>
<keyword id="KW-0456">Lyase</keyword>
<keyword id="KW-0460">Magnesium</keyword>
<keyword id="KW-0479">Metal-binding</keyword>
<accession>G8H5N0</accession>
<organism>
    <name type="scientific">Solanum habrochaites</name>
    <name type="common">Wild tomato</name>
    <name type="synonym">Lycopersicon hirsutum</name>
    <dbReference type="NCBI Taxonomy" id="62890"/>
    <lineage>
        <taxon>Eukaryota</taxon>
        <taxon>Viridiplantae</taxon>
        <taxon>Streptophyta</taxon>
        <taxon>Embryophyta</taxon>
        <taxon>Tracheophyta</taxon>
        <taxon>Spermatophyta</taxon>
        <taxon>Magnoliopsida</taxon>
        <taxon>eudicotyledons</taxon>
        <taxon>Gunneridae</taxon>
        <taxon>Pentapetalae</taxon>
        <taxon>asterids</taxon>
        <taxon>lamiids</taxon>
        <taxon>Solanales</taxon>
        <taxon>Solanaceae</taxon>
        <taxon>Solanoideae</taxon>
        <taxon>Solaneae</taxon>
        <taxon>Solanum</taxon>
        <taxon>Solanum subgen. Lycopersicon</taxon>
    </lineage>
</organism>